<proteinExistence type="evidence at protein level"/>
<gene>
    <name type="primary">DIT1</name>
    <name type="ordered locus">YDR403W</name>
    <name type="ORF">D9509.21</name>
</gene>
<keyword id="KW-1185">Reference proteome</keyword>
<keyword id="KW-0749">Sporulation</keyword>
<evidence type="ECO:0000256" key="1">
    <source>
        <dbReference type="SAM" id="MobiDB-lite"/>
    </source>
</evidence>
<evidence type="ECO:0000305" key="2"/>
<sequence length="536" mass="61391">MTFTSNLPSSSEQSISPPASSFSSSTDTLKDIDIPHNGADLSTYSKFLALYCRSDKCDDFYSLEEKQNCKFGDQWLDFINTIHNLDFSESEVSGRVSERILPASLANKFTNNLGVAIKISEYTRDDERQIRGCVTTVENENSFNNWFVYHILDQSQLSLSEHPIVTKEVKYHELFADFFEKNLKNTIVNDQWNFGGRDYFIERSRYFTDRYLRIECILPAFPCKSSNEQKVYGSVPDKGEELALKRLIKATQDLVKIYPPGMKIWIVSDGHVFSDCIGVDDDVVSTYTTKLHELYKRVAIPGVDAIGFCGLNDLFFSGAASKVFDPKWVSDVEVAHYTGTQICPKSDLSRQILMKGCDTDAGRLRKQIAIEGHPRLHLYRGFSRFMMEDLSLLEHFQSYSRKKFKKIISMIAFNMIKRNDAYSNLVELIFPHHLRISIHAHTNSGPKFGIKVISNEQCSIVSSLEDLDEPKFEDFLHIPTPWHNCVVKVEDEKEKYFLTKSKVVKEALEKGMYDGVWKDTRFDIGEGGHFVIKKIS</sequence>
<accession>P21623</accession>
<accession>D6VT35</accession>
<protein>
    <recommendedName>
        <fullName>Spore wall maturation protein DIT1</fullName>
    </recommendedName>
</protein>
<organism>
    <name type="scientific">Saccharomyces cerevisiae (strain ATCC 204508 / S288c)</name>
    <name type="common">Baker's yeast</name>
    <dbReference type="NCBI Taxonomy" id="559292"/>
    <lineage>
        <taxon>Eukaryota</taxon>
        <taxon>Fungi</taxon>
        <taxon>Dikarya</taxon>
        <taxon>Ascomycota</taxon>
        <taxon>Saccharomycotina</taxon>
        <taxon>Saccharomycetes</taxon>
        <taxon>Saccharomycetales</taxon>
        <taxon>Saccharomycetaceae</taxon>
        <taxon>Saccharomyces</taxon>
    </lineage>
</organism>
<comment type="function">
    <text>Involved in spore wall maturation. Catalyzes a two step reaction that leads to the LL-dityrosine containing precursor of the spore wall.</text>
</comment>
<comment type="developmental stage">
    <text>Sporulation.</text>
</comment>
<reference key="1">
    <citation type="journal article" date="1990" name="Genes Dev.">
        <title>Isolation of two developmentally regulated genes involved in spore wall maturation in Saccharomyces cerevisiae.</title>
        <authorList>
            <person name="Briza P."/>
            <person name="Breitenbach M."/>
            <person name="Ellinger A."/>
            <person name="Segall J."/>
        </authorList>
    </citation>
    <scope>NUCLEOTIDE SEQUENCE [GENOMIC DNA]</scope>
    <source>
        <strain>ATCC 204510 / AB320</strain>
    </source>
</reference>
<reference key="2">
    <citation type="journal article" date="1997" name="Nature">
        <title>The nucleotide sequence of Saccharomyces cerevisiae chromosome IV.</title>
        <authorList>
            <person name="Jacq C."/>
            <person name="Alt-Moerbe J."/>
            <person name="Andre B."/>
            <person name="Arnold W."/>
            <person name="Bahr A."/>
            <person name="Ballesta J.P.G."/>
            <person name="Bargues M."/>
            <person name="Baron L."/>
            <person name="Becker A."/>
            <person name="Biteau N."/>
            <person name="Bloecker H."/>
            <person name="Blugeon C."/>
            <person name="Boskovic J."/>
            <person name="Brandt P."/>
            <person name="Brueckner M."/>
            <person name="Buitrago M.J."/>
            <person name="Coster F."/>
            <person name="Delaveau T."/>
            <person name="del Rey F."/>
            <person name="Dujon B."/>
            <person name="Eide L.G."/>
            <person name="Garcia-Cantalejo J.M."/>
            <person name="Goffeau A."/>
            <person name="Gomez-Peris A."/>
            <person name="Granotier C."/>
            <person name="Hanemann V."/>
            <person name="Hankeln T."/>
            <person name="Hoheisel J.D."/>
            <person name="Jaeger W."/>
            <person name="Jimenez A."/>
            <person name="Jonniaux J.-L."/>
            <person name="Kraemer C."/>
            <person name="Kuester H."/>
            <person name="Laamanen P."/>
            <person name="Legros Y."/>
            <person name="Louis E.J."/>
            <person name="Moeller-Rieker S."/>
            <person name="Monnet A."/>
            <person name="Moro M."/>
            <person name="Mueller-Auer S."/>
            <person name="Nussbaumer B."/>
            <person name="Paricio N."/>
            <person name="Paulin L."/>
            <person name="Perea J."/>
            <person name="Perez-Alonso M."/>
            <person name="Perez-Ortin J.E."/>
            <person name="Pohl T.M."/>
            <person name="Prydz H."/>
            <person name="Purnelle B."/>
            <person name="Rasmussen S.W."/>
            <person name="Remacha M.A."/>
            <person name="Revuelta J.L."/>
            <person name="Rieger M."/>
            <person name="Salom D."/>
            <person name="Saluz H.P."/>
            <person name="Saiz J.E."/>
            <person name="Saren A.-M."/>
            <person name="Schaefer M."/>
            <person name="Scharfe M."/>
            <person name="Schmidt E.R."/>
            <person name="Schneider C."/>
            <person name="Scholler P."/>
            <person name="Schwarz S."/>
            <person name="Soler-Mira A."/>
            <person name="Urrestarazu L.A."/>
            <person name="Verhasselt P."/>
            <person name="Vissers S."/>
            <person name="Voet M."/>
            <person name="Volckaert G."/>
            <person name="Wagner G."/>
            <person name="Wambutt R."/>
            <person name="Wedler E."/>
            <person name="Wedler H."/>
            <person name="Woelfl S."/>
            <person name="Harris D.E."/>
            <person name="Bowman S."/>
            <person name="Brown D."/>
            <person name="Churcher C.M."/>
            <person name="Connor R."/>
            <person name="Dedman K."/>
            <person name="Gentles S."/>
            <person name="Hamlin N."/>
            <person name="Hunt S."/>
            <person name="Jones L."/>
            <person name="McDonald S."/>
            <person name="Murphy L.D."/>
            <person name="Niblett D."/>
            <person name="Odell C."/>
            <person name="Oliver K."/>
            <person name="Rajandream M.A."/>
            <person name="Richards C."/>
            <person name="Shore L."/>
            <person name="Walsh S.V."/>
            <person name="Barrell B.G."/>
            <person name="Dietrich F.S."/>
            <person name="Mulligan J.T."/>
            <person name="Allen E."/>
            <person name="Araujo R."/>
            <person name="Aviles E."/>
            <person name="Berno A."/>
            <person name="Carpenter J."/>
            <person name="Chen E."/>
            <person name="Cherry J.M."/>
            <person name="Chung E."/>
            <person name="Duncan M."/>
            <person name="Hunicke-Smith S."/>
            <person name="Hyman R.W."/>
            <person name="Komp C."/>
            <person name="Lashkari D."/>
            <person name="Lew H."/>
            <person name="Lin D."/>
            <person name="Mosedale D."/>
            <person name="Nakahara K."/>
            <person name="Namath A."/>
            <person name="Oefner P."/>
            <person name="Oh C."/>
            <person name="Petel F.X."/>
            <person name="Roberts D."/>
            <person name="Schramm S."/>
            <person name="Schroeder M."/>
            <person name="Shogren T."/>
            <person name="Shroff N."/>
            <person name="Winant A."/>
            <person name="Yelton M.A."/>
            <person name="Botstein D."/>
            <person name="Davis R.W."/>
            <person name="Johnston M."/>
            <person name="Andrews S."/>
            <person name="Brinkman R."/>
            <person name="Cooper J."/>
            <person name="Ding H."/>
            <person name="Du Z."/>
            <person name="Favello A."/>
            <person name="Fulton L."/>
            <person name="Gattung S."/>
            <person name="Greco T."/>
            <person name="Hallsworth K."/>
            <person name="Hawkins J."/>
            <person name="Hillier L.W."/>
            <person name="Jier M."/>
            <person name="Johnson D."/>
            <person name="Johnston L."/>
            <person name="Kirsten J."/>
            <person name="Kucaba T."/>
            <person name="Langston Y."/>
            <person name="Latreille P."/>
            <person name="Le T."/>
            <person name="Mardis E."/>
            <person name="Menezes S."/>
            <person name="Miller N."/>
            <person name="Nhan M."/>
            <person name="Pauley A."/>
            <person name="Peluso D."/>
            <person name="Rifkin L."/>
            <person name="Riles L."/>
            <person name="Taich A."/>
            <person name="Trevaskis E."/>
            <person name="Vignati D."/>
            <person name="Wilcox L."/>
            <person name="Wohldman P."/>
            <person name="Vaudin M."/>
            <person name="Wilson R."/>
            <person name="Waterston R."/>
            <person name="Albermann K."/>
            <person name="Hani J."/>
            <person name="Heumann K."/>
            <person name="Kleine K."/>
            <person name="Mewes H.-W."/>
            <person name="Zollner A."/>
            <person name="Zaccaria P."/>
        </authorList>
    </citation>
    <scope>NUCLEOTIDE SEQUENCE [LARGE SCALE GENOMIC DNA]</scope>
    <source>
        <strain>ATCC 204508 / S288c</strain>
    </source>
</reference>
<reference key="3">
    <citation type="journal article" date="2014" name="G3 (Bethesda)">
        <title>The reference genome sequence of Saccharomyces cerevisiae: Then and now.</title>
        <authorList>
            <person name="Engel S.R."/>
            <person name="Dietrich F.S."/>
            <person name="Fisk D.G."/>
            <person name="Binkley G."/>
            <person name="Balakrishnan R."/>
            <person name="Costanzo M.C."/>
            <person name="Dwight S.S."/>
            <person name="Hitz B.C."/>
            <person name="Karra K."/>
            <person name="Nash R.S."/>
            <person name="Weng S."/>
            <person name="Wong E.D."/>
            <person name="Lloyd P."/>
            <person name="Skrzypek M.S."/>
            <person name="Miyasato S.R."/>
            <person name="Simison M."/>
            <person name="Cherry J.M."/>
        </authorList>
    </citation>
    <scope>GENOME REANNOTATION</scope>
    <source>
        <strain>ATCC 204508 / S288c</strain>
    </source>
</reference>
<reference key="4">
    <citation type="journal article" date="1994" name="Proc. Natl. Acad. Sci. U.S.A.">
        <title>The sporulation-specific enzymes encoded by the DIT1 and DIT2 genes catalyze a two-step reaction leading to a soluble LL-dityrosine-containing precursor of the yeast spore wall.</title>
        <authorList>
            <person name="Briza P."/>
            <person name="Eckerstorfer M."/>
            <person name="Breitenbach M."/>
        </authorList>
    </citation>
    <scope>CHARACTERIZATION</scope>
</reference>
<dbReference type="EMBL" id="X55712">
    <property type="protein sequence ID" value="CAA39245.1"/>
    <property type="molecule type" value="Genomic_DNA"/>
</dbReference>
<dbReference type="EMBL" id="U32274">
    <property type="protein sequence ID" value="AAB64843.1"/>
    <property type="molecule type" value="Genomic_DNA"/>
</dbReference>
<dbReference type="EMBL" id="BK006938">
    <property type="protein sequence ID" value="DAA12245.1"/>
    <property type="molecule type" value="Genomic_DNA"/>
</dbReference>
<dbReference type="PIR" id="A36395">
    <property type="entry name" value="A36395"/>
</dbReference>
<dbReference type="RefSeq" id="NP_010691.1">
    <property type="nucleotide sequence ID" value="NM_001180711.1"/>
</dbReference>
<dbReference type="SMR" id="P21623"/>
<dbReference type="BioGRID" id="32463">
    <property type="interactions" value="82"/>
</dbReference>
<dbReference type="DIP" id="DIP-5257N"/>
<dbReference type="FunCoup" id="P21623">
    <property type="interactions" value="315"/>
</dbReference>
<dbReference type="IntAct" id="P21623">
    <property type="interactions" value="15"/>
</dbReference>
<dbReference type="STRING" id="4932.YDR403W"/>
<dbReference type="PaxDb" id="4932-YDR403W"/>
<dbReference type="EnsemblFungi" id="YDR403W_mRNA">
    <property type="protein sequence ID" value="YDR403W"/>
    <property type="gene ID" value="YDR403W"/>
</dbReference>
<dbReference type="GeneID" id="852012"/>
<dbReference type="KEGG" id="sce:YDR403W"/>
<dbReference type="AGR" id="SGD:S000002811"/>
<dbReference type="SGD" id="S000002811">
    <property type="gene designation" value="DIT1"/>
</dbReference>
<dbReference type="VEuPathDB" id="FungiDB:YDR403W"/>
<dbReference type="eggNOG" id="ENOG502QRI9">
    <property type="taxonomic scope" value="Eukaryota"/>
</dbReference>
<dbReference type="HOGENOM" id="CLU_025510_0_1_1"/>
<dbReference type="InParanoid" id="P21623"/>
<dbReference type="OMA" id="VAFEMIK"/>
<dbReference type="OrthoDB" id="429813at2759"/>
<dbReference type="BioCyc" id="YEAST:G3O-29947-MONOMER"/>
<dbReference type="BioGRID-ORCS" id="852012">
    <property type="hits" value="0 hits in 10 CRISPR screens"/>
</dbReference>
<dbReference type="PRO" id="PR:P21623"/>
<dbReference type="Proteomes" id="UP000002311">
    <property type="component" value="Chromosome IV"/>
</dbReference>
<dbReference type="RNAct" id="P21623">
    <property type="molecule type" value="protein"/>
</dbReference>
<dbReference type="GO" id="GO:0042764">
    <property type="term" value="C:ascospore-type prospore"/>
    <property type="evidence" value="ECO:0000314"/>
    <property type="project" value="SGD"/>
</dbReference>
<dbReference type="GO" id="GO:0005829">
    <property type="term" value="C:cytosol"/>
    <property type="evidence" value="ECO:0000314"/>
    <property type="project" value="SGD"/>
</dbReference>
<dbReference type="GO" id="GO:0003824">
    <property type="term" value="F:catalytic activity"/>
    <property type="evidence" value="ECO:0000314"/>
    <property type="project" value="SGD"/>
</dbReference>
<dbReference type="GO" id="GO:0030476">
    <property type="term" value="P:ascospore wall assembly"/>
    <property type="evidence" value="ECO:0000314"/>
    <property type="project" value="SGD"/>
</dbReference>
<dbReference type="InterPro" id="IPR007817">
    <property type="entry name" value="Isocyanide_synthase_DIT1"/>
</dbReference>
<dbReference type="PANTHER" id="PTHR37285">
    <property type="entry name" value="SPORE WALL MATURATION PROTEIN DIT1"/>
    <property type="match status" value="1"/>
</dbReference>
<dbReference type="PANTHER" id="PTHR37285:SF5">
    <property type="entry name" value="SPORE WALL MATURATION PROTEIN DIT1"/>
    <property type="match status" value="1"/>
</dbReference>
<dbReference type="Pfam" id="PF05141">
    <property type="entry name" value="DIT1_PvcA"/>
    <property type="match status" value="1"/>
</dbReference>
<feature type="chain" id="PRO_0000079920" description="Spore wall maturation protein DIT1">
    <location>
        <begin position="1"/>
        <end position="536"/>
    </location>
</feature>
<feature type="region of interest" description="Disordered" evidence="1">
    <location>
        <begin position="1"/>
        <end position="23"/>
    </location>
</feature>
<feature type="sequence conflict" description="In Ref. 1; CAA39245." evidence="2" ref="1">
    <original>F</original>
    <variation>S</variation>
    <location>
        <position position="273"/>
    </location>
</feature>
<name>DIT1_YEAST</name>